<reference key="1">
    <citation type="journal article" date="2003" name="Proc. Natl. Acad. Sci. U.S.A.">
        <title>The genome of Nanoarchaeum equitans: insights into early archaeal evolution and derived parasitism.</title>
        <authorList>
            <person name="Waters E."/>
            <person name="Hohn M.J."/>
            <person name="Ahel I."/>
            <person name="Graham D.E."/>
            <person name="Adams M.D."/>
            <person name="Barnstead M."/>
            <person name="Beeson K.Y."/>
            <person name="Bibbs L."/>
            <person name="Bolanos R."/>
            <person name="Keller M."/>
            <person name="Kretz K."/>
            <person name="Lin X."/>
            <person name="Mathur E."/>
            <person name="Ni J."/>
            <person name="Podar M."/>
            <person name="Richardson T."/>
            <person name="Sutton G.G."/>
            <person name="Simon M."/>
            <person name="Soell D."/>
            <person name="Stetter K.O."/>
            <person name="Short J.M."/>
            <person name="Noorderwier M."/>
        </authorList>
    </citation>
    <scope>NUCLEOTIDE SEQUENCE [LARGE SCALE GENOMIC DNA]</scope>
    <source>
        <strain>Kin4-M</strain>
    </source>
</reference>
<protein>
    <recommendedName>
        <fullName evidence="1">Large ribosomal subunit protein eL18</fullName>
    </recommendedName>
    <alternativeName>
        <fullName evidence="2">50S ribosomal protein L18e</fullName>
    </alternativeName>
</protein>
<accession>Q74MB7</accession>
<proteinExistence type="inferred from homology"/>
<gene>
    <name evidence="1" type="primary">rpl18e</name>
    <name type="ordered locus">NEQ489</name>
</gene>
<evidence type="ECO:0000255" key="1">
    <source>
        <dbReference type="HAMAP-Rule" id="MF_00329"/>
    </source>
</evidence>
<evidence type="ECO:0000305" key="2"/>
<sequence length="118" mass="13493">MVKPTGPTDVNVRKLIRQLEKTKRPIFKYIAELLSKPKRRKKHFVVNLWKIEKHSNDGDTIIVPGKVLGSGELTKDVKVVALSFSQTALEKLKDKAIYLENFVEQAKDKKLPNTKILI</sequence>
<organism>
    <name type="scientific">Nanoarchaeum equitans (strain Kin4-M)</name>
    <dbReference type="NCBI Taxonomy" id="228908"/>
    <lineage>
        <taxon>Archaea</taxon>
        <taxon>Nanobdellota</taxon>
        <taxon>Candidatus Nanoarchaeia</taxon>
        <taxon>Nanoarchaeales</taxon>
        <taxon>Nanoarchaeaceae</taxon>
        <taxon>Nanoarchaeum</taxon>
    </lineage>
</organism>
<dbReference type="EMBL" id="AE017199">
    <property type="protein sequence ID" value="AAR39331.1"/>
    <property type="molecule type" value="Genomic_DNA"/>
</dbReference>
<dbReference type="SMR" id="Q74MB7"/>
<dbReference type="STRING" id="228908.NEQ489"/>
<dbReference type="EnsemblBacteria" id="AAR39331">
    <property type="protein sequence ID" value="AAR39331"/>
    <property type="gene ID" value="NEQ489"/>
</dbReference>
<dbReference type="KEGG" id="neq:NEQ489"/>
<dbReference type="HOGENOM" id="CLU_146465_0_0_2"/>
<dbReference type="Proteomes" id="UP000000578">
    <property type="component" value="Chromosome"/>
</dbReference>
<dbReference type="GO" id="GO:1990904">
    <property type="term" value="C:ribonucleoprotein complex"/>
    <property type="evidence" value="ECO:0007669"/>
    <property type="project" value="UniProtKB-KW"/>
</dbReference>
<dbReference type="GO" id="GO:0005840">
    <property type="term" value="C:ribosome"/>
    <property type="evidence" value="ECO:0007669"/>
    <property type="project" value="UniProtKB-KW"/>
</dbReference>
<dbReference type="GO" id="GO:0006412">
    <property type="term" value="P:translation"/>
    <property type="evidence" value="ECO:0007669"/>
    <property type="project" value="UniProtKB-UniRule"/>
</dbReference>
<dbReference type="Gene3D" id="3.100.10.10">
    <property type="match status" value="1"/>
</dbReference>
<dbReference type="HAMAP" id="MF_00329">
    <property type="entry name" value="Ribosomal_eL18"/>
    <property type="match status" value="1"/>
</dbReference>
<dbReference type="InterPro" id="IPR022947">
    <property type="entry name" value="Ribosomal_eL18_arc"/>
</dbReference>
<dbReference type="InterPro" id="IPR021131">
    <property type="entry name" value="Ribosomal_uL15/eL18"/>
</dbReference>
<dbReference type="InterPro" id="IPR036227">
    <property type="entry name" value="Ribosomal_uL15/eL18_sf"/>
</dbReference>
<dbReference type="NCBIfam" id="NF003079">
    <property type="entry name" value="PRK04005.1"/>
    <property type="match status" value="1"/>
</dbReference>
<dbReference type="Pfam" id="PF00828">
    <property type="entry name" value="Ribosomal_L27A"/>
    <property type="match status" value="1"/>
</dbReference>
<dbReference type="SUPFAM" id="SSF52080">
    <property type="entry name" value="Ribosomal proteins L15p and L18e"/>
    <property type="match status" value="1"/>
</dbReference>
<name>RL18E_NANEQ</name>
<feature type="chain" id="PRO_0000132795" description="Large ribosomal subunit protein eL18">
    <location>
        <begin position="1"/>
        <end position="118"/>
    </location>
</feature>
<comment type="similarity">
    <text evidence="1">Belongs to the eukaryotic ribosomal protein eL18 family.</text>
</comment>
<keyword id="KW-1185">Reference proteome</keyword>
<keyword id="KW-0687">Ribonucleoprotein</keyword>
<keyword id="KW-0689">Ribosomal protein</keyword>